<comment type="function">
    <text evidence="1">Zinc phosphodiesterase, which displays some tRNA 3'-processing endonuclease activity. Probably involved in tRNA maturation, by removing a 3'-trailer from precursor tRNA.</text>
</comment>
<comment type="catalytic activity">
    <reaction evidence="1">
        <text>Endonucleolytic cleavage of RNA, removing extra 3' nucleotides from tRNA precursor, generating 3' termini of tRNAs. A 3'-hydroxy group is left at the tRNA terminus and a 5'-phosphoryl group is left at the trailer molecule.</text>
        <dbReference type="EC" id="3.1.26.11"/>
    </reaction>
</comment>
<comment type="cofactor">
    <cofactor evidence="1">
        <name>Zn(2+)</name>
        <dbReference type="ChEBI" id="CHEBI:29105"/>
    </cofactor>
    <text evidence="1">Binds 2 Zn(2+) ions.</text>
</comment>
<comment type="subunit">
    <text evidence="1">Homodimer.</text>
</comment>
<comment type="similarity">
    <text evidence="1">Belongs to the RNase Z family.</text>
</comment>
<keyword id="KW-0255">Endonuclease</keyword>
<keyword id="KW-0378">Hydrolase</keyword>
<keyword id="KW-0479">Metal-binding</keyword>
<keyword id="KW-0540">Nuclease</keyword>
<keyword id="KW-0819">tRNA processing</keyword>
<keyword id="KW-0862">Zinc</keyword>
<reference key="1">
    <citation type="submission" date="2008-06" db="EMBL/GenBank/DDBJ databases">
        <title>Lactobacillus casei BL23 complete genome sequence.</title>
        <authorList>
            <person name="Maze A."/>
            <person name="Boel G."/>
            <person name="Bourand A."/>
            <person name="Loux V."/>
            <person name="Gibrat J.F."/>
            <person name="Zuniga M."/>
            <person name="Hartke A."/>
            <person name="Deutscher J."/>
        </authorList>
    </citation>
    <scope>NUCLEOTIDE SEQUENCE [LARGE SCALE GENOMIC DNA]</scope>
    <source>
        <strain>BL23</strain>
    </source>
</reference>
<gene>
    <name evidence="1" type="primary">rnz</name>
    <name type="ordered locus">LCABL_15740</name>
</gene>
<accession>B3WE54</accession>
<name>RNZ_LACCB</name>
<feature type="chain" id="PRO_1000187965" description="Ribonuclease Z">
    <location>
        <begin position="1"/>
        <end position="320"/>
    </location>
</feature>
<feature type="active site" description="Proton acceptor" evidence="1">
    <location>
        <position position="67"/>
    </location>
</feature>
<feature type="binding site" evidence="1">
    <location>
        <position position="63"/>
    </location>
    <ligand>
        <name>Zn(2+)</name>
        <dbReference type="ChEBI" id="CHEBI:29105"/>
        <label>1</label>
        <note>catalytic</note>
    </ligand>
</feature>
<feature type="binding site" evidence="1">
    <location>
        <position position="65"/>
    </location>
    <ligand>
        <name>Zn(2+)</name>
        <dbReference type="ChEBI" id="CHEBI:29105"/>
        <label>1</label>
        <note>catalytic</note>
    </ligand>
</feature>
<feature type="binding site" evidence="1">
    <location>
        <position position="67"/>
    </location>
    <ligand>
        <name>Zn(2+)</name>
        <dbReference type="ChEBI" id="CHEBI:29105"/>
        <label>2</label>
        <note>catalytic</note>
    </ligand>
</feature>
<feature type="binding site" evidence="1">
    <location>
        <position position="68"/>
    </location>
    <ligand>
        <name>Zn(2+)</name>
        <dbReference type="ChEBI" id="CHEBI:29105"/>
        <label>2</label>
        <note>catalytic</note>
    </ligand>
</feature>
<feature type="binding site" evidence="1">
    <location>
        <position position="141"/>
    </location>
    <ligand>
        <name>Zn(2+)</name>
        <dbReference type="ChEBI" id="CHEBI:29105"/>
        <label>1</label>
        <note>catalytic</note>
    </ligand>
</feature>
<feature type="binding site" evidence="1">
    <location>
        <position position="212"/>
    </location>
    <ligand>
        <name>Zn(2+)</name>
        <dbReference type="ChEBI" id="CHEBI:29105"/>
        <label>1</label>
        <note>catalytic</note>
    </ligand>
</feature>
<feature type="binding site" evidence="1">
    <location>
        <position position="212"/>
    </location>
    <ligand>
        <name>Zn(2+)</name>
        <dbReference type="ChEBI" id="CHEBI:29105"/>
        <label>2</label>
        <note>catalytic</note>
    </ligand>
</feature>
<feature type="binding site" evidence="1">
    <location>
        <position position="270"/>
    </location>
    <ligand>
        <name>Zn(2+)</name>
        <dbReference type="ChEBI" id="CHEBI:29105"/>
        <label>2</label>
        <note>catalytic</note>
    </ligand>
</feature>
<dbReference type="EC" id="3.1.26.11" evidence="1"/>
<dbReference type="EMBL" id="FM177140">
    <property type="protein sequence ID" value="CAQ66655.1"/>
    <property type="molecule type" value="Genomic_DNA"/>
</dbReference>
<dbReference type="SMR" id="B3WE54"/>
<dbReference type="KEGG" id="lcb:LCABL_15740"/>
<dbReference type="HOGENOM" id="CLU_031317_2_0_9"/>
<dbReference type="GO" id="GO:0042781">
    <property type="term" value="F:3'-tRNA processing endoribonuclease activity"/>
    <property type="evidence" value="ECO:0007669"/>
    <property type="project" value="UniProtKB-UniRule"/>
</dbReference>
<dbReference type="GO" id="GO:0008270">
    <property type="term" value="F:zinc ion binding"/>
    <property type="evidence" value="ECO:0007669"/>
    <property type="project" value="UniProtKB-UniRule"/>
</dbReference>
<dbReference type="CDD" id="cd07717">
    <property type="entry name" value="RNaseZ_ZiPD-like_MBL-fold"/>
    <property type="match status" value="1"/>
</dbReference>
<dbReference type="FunFam" id="3.60.15.10:FF:000002">
    <property type="entry name" value="Ribonuclease Z"/>
    <property type="match status" value="1"/>
</dbReference>
<dbReference type="Gene3D" id="3.60.15.10">
    <property type="entry name" value="Ribonuclease Z/Hydroxyacylglutathione hydrolase-like"/>
    <property type="match status" value="1"/>
</dbReference>
<dbReference type="HAMAP" id="MF_01818">
    <property type="entry name" value="RNase_Z_BN"/>
    <property type="match status" value="1"/>
</dbReference>
<dbReference type="InterPro" id="IPR001279">
    <property type="entry name" value="Metallo-B-lactamas"/>
</dbReference>
<dbReference type="InterPro" id="IPR036866">
    <property type="entry name" value="RibonucZ/Hydroxyglut_hydro"/>
</dbReference>
<dbReference type="InterPro" id="IPR013471">
    <property type="entry name" value="RNase_Z/BN"/>
</dbReference>
<dbReference type="NCBIfam" id="NF000801">
    <property type="entry name" value="PRK00055.1-3"/>
    <property type="match status" value="1"/>
</dbReference>
<dbReference type="NCBIfam" id="TIGR02651">
    <property type="entry name" value="RNase_Z"/>
    <property type="match status" value="1"/>
</dbReference>
<dbReference type="PANTHER" id="PTHR46018">
    <property type="entry name" value="ZINC PHOSPHODIESTERASE ELAC PROTEIN 1"/>
    <property type="match status" value="1"/>
</dbReference>
<dbReference type="PANTHER" id="PTHR46018:SF2">
    <property type="entry name" value="ZINC PHOSPHODIESTERASE ELAC PROTEIN 1"/>
    <property type="match status" value="1"/>
</dbReference>
<dbReference type="Pfam" id="PF00753">
    <property type="entry name" value="Lactamase_B"/>
    <property type="match status" value="1"/>
</dbReference>
<dbReference type="SUPFAM" id="SSF56281">
    <property type="entry name" value="Metallo-hydrolase/oxidoreductase"/>
    <property type="match status" value="1"/>
</dbReference>
<sequence>MEIQFLGTGAGSPSKSRNVSSLALKLLDERNEVWLFDAGEGTQHQILQTAIRPRKIAKVFITHLHGDHIFGLPGFLASRSNQGGTDPLTIYGPSGIEDFVKTSLKVSQSHLSYPLKFVLLQHPGVAFEDQTFKVTFDRLDHRITSFGFRIEEKPHPGELLIDKVRAAKIPSGPVYAALKAGETVTLPDGRIFDGHDFIGPAQPGRTVAIFGDTRMCNRALPLAAGADVLVHESTFGPDESQLAKQYYHATNVQAAALAKRAGVGRLLLNHISARYLSPGVAMLEKTARQIFPNTHVVKDFEEINIPFRSEQSEPAVTVKS</sequence>
<organism>
    <name type="scientific">Lacticaseibacillus casei (strain BL23)</name>
    <name type="common">Lactobacillus casei</name>
    <dbReference type="NCBI Taxonomy" id="543734"/>
    <lineage>
        <taxon>Bacteria</taxon>
        <taxon>Bacillati</taxon>
        <taxon>Bacillota</taxon>
        <taxon>Bacilli</taxon>
        <taxon>Lactobacillales</taxon>
        <taxon>Lactobacillaceae</taxon>
        <taxon>Lacticaseibacillus</taxon>
    </lineage>
</organism>
<evidence type="ECO:0000255" key="1">
    <source>
        <dbReference type="HAMAP-Rule" id="MF_01818"/>
    </source>
</evidence>
<protein>
    <recommendedName>
        <fullName evidence="1">Ribonuclease Z</fullName>
        <shortName evidence="1">RNase Z</shortName>
        <ecNumber evidence="1">3.1.26.11</ecNumber>
    </recommendedName>
    <alternativeName>
        <fullName evidence="1">tRNA 3 endonuclease</fullName>
    </alternativeName>
    <alternativeName>
        <fullName evidence="1">tRNase Z</fullName>
    </alternativeName>
</protein>
<proteinExistence type="inferred from homology"/>